<name>CLPX_HYDS0</name>
<feature type="chain" id="PRO_1000123838" description="ATP-dependent Clp protease ATP-binding subunit ClpX">
    <location>
        <begin position="1"/>
        <end position="399"/>
    </location>
</feature>
<feature type="domain" description="ClpX-type ZB" evidence="2">
    <location>
        <begin position="1"/>
        <end position="50"/>
    </location>
</feature>
<feature type="binding site" evidence="2">
    <location>
        <position position="8"/>
    </location>
    <ligand>
        <name>Zn(2+)</name>
        <dbReference type="ChEBI" id="CHEBI:29105"/>
    </ligand>
</feature>
<feature type="binding site" evidence="2">
    <location>
        <position position="11"/>
    </location>
    <ligand>
        <name>Zn(2+)</name>
        <dbReference type="ChEBI" id="CHEBI:29105"/>
    </ligand>
</feature>
<feature type="binding site" evidence="2">
    <location>
        <position position="31"/>
    </location>
    <ligand>
        <name>Zn(2+)</name>
        <dbReference type="ChEBI" id="CHEBI:29105"/>
    </ligand>
</feature>
<feature type="binding site" evidence="2">
    <location>
        <position position="34"/>
    </location>
    <ligand>
        <name>Zn(2+)</name>
        <dbReference type="ChEBI" id="CHEBI:29105"/>
    </ligand>
</feature>
<feature type="binding site" evidence="1">
    <location>
        <begin position="110"/>
        <end position="117"/>
    </location>
    <ligand>
        <name>ATP</name>
        <dbReference type="ChEBI" id="CHEBI:30616"/>
    </ligand>
</feature>
<protein>
    <recommendedName>
        <fullName evidence="1">ATP-dependent Clp protease ATP-binding subunit ClpX</fullName>
    </recommendedName>
</protein>
<gene>
    <name evidence="1" type="primary">clpX</name>
    <name type="ordered locus">HY04AAS1_0147</name>
</gene>
<comment type="function">
    <text evidence="1">ATP-dependent specificity component of the Clp protease. It directs the protease to specific substrates. Can perform chaperone functions in the absence of ClpP.</text>
</comment>
<comment type="subunit">
    <text evidence="1">Component of the ClpX-ClpP complex. Forms a hexameric ring that, in the presence of ATP, binds to fourteen ClpP subunits assembled into a disk-like structure with a central cavity, resembling the structure of eukaryotic proteasomes.</text>
</comment>
<comment type="similarity">
    <text evidence="1">Belongs to the ClpX chaperone family.</text>
</comment>
<sequence>MASKKEYCSFCNKSSKDVPLMIAGPNGMNICSECVEKAMDLIKQHDKEEVTKEVRSIPKPKEIKKILDEFIIGQDEAKKILSVAVYNHYKRILRKSDTDIEKSNILLIGPTGSGKTLLAKTLAKILNVPFAIADATTLTEAGYVGEDVENVLVRLLQNCDYNIEKAKKGIIYIDEIDKIAKKSGHNPSITRDVSGEGVQQALLKIIEGTIANVPPQGGRKHPHQEFIQLDTTNILFICGGAFVGLEDIIKRRLGKSTVGFETEISKYKEEGNILSQVEPDDLINFGLIPEFVGRLPVISVLNELTEEDLIRILTEPKNAVIKQYKELLRMEGIGLEFTEGALREIAKEAIKRKTGARGLRAIVEKIMTDIMYEAPSLVNVEKIVIDENKKPVYMYKKAG</sequence>
<proteinExistence type="inferred from homology"/>
<organism>
    <name type="scientific">Hydrogenobaculum sp. (strain Y04AAS1)</name>
    <dbReference type="NCBI Taxonomy" id="380749"/>
    <lineage>
        <taxon>Bacteria</taxon>
        <taxon>Pseudomonadati</taxon>
        <taxon>Aquificota</taxon>
        <taxon>Aquificia</taxon>
        <taxon>Aquificales</taxon>
        <taxon>Aquificaceae</taxon>
        <taxon>Hydrogenobaculum</taxon>
    </lineage>
</organism>
<keyword id="KW-0067">ATP-binding</keyword>
<keyword id="KW-0143">Chaperone</keyword>
<keyword id="KW-0479">Metal-binding</keyword>
<keyword id="KW-0547">Nucleotide-binding</keyword>
<keyword id="KW-0862">Zinc</keyword>
<reference key="1">
    <citation type="journal article" date="2009" name="J. Bacteriol.">
        <title>Complete and draft genome sequences of six members of the Aquificales.</title>
        <authorList>
            <person name="Reysenbach A.-L."/>
            <person name="Hamamura N."/>
            <person name="Podar M."/>
            <person name="Griffiths E."/>
            <person name="Ferreira S."/>
            <person name="Hochstein R."/>
            <person name="Heidelberg J."/>
            <person name="Johnson J."/>
            <person name="Mead D."/>
            <person name="Pohorille A."/>
            <person name="Sarmiento M."/>
            <person name="Schweighofer K."/>
            <person name="Seshadri R."/>
            <person name="Voytek M.A."/>
        </authorList>
    </citation>
    <scope>NUCLEOTIDE SEQUENCE [LARGE SCALE GENOMIC DNA]</scope>
    <source>
        <strain>Y04AAS1</strain>
    </source>
</reference>
<accession>B4U6S1</accession>
<evidence type="ECO:0000255" key="1">
    <source>
        <dbReference type="HAMAP-Rule" id="MF_00175"/>
    </source>
</evidence>
<evidence type="ECO:0000255" key="2">
    <source>
        <dbReference type="PROSITE-ProRule" id="PRU01250"/>
    </source>
</evidence>
<dbReference type="EMBL" id="CP001130">
    <property type="protein sequence ID" value="ACG56839.1"/>
    <property type="molecule type" value="Genomic_DNA"/>
</dbReference>
<dbReference type="RefSeq" id="WP_012513196.1">
    <property type="nucleotide sequence ID" value="NC_011126.1"/>
</dbReference>
<dbReference type="SMR" id="B4U6S1"/>
<dbReference type="STRING" id="380749.HY04AAS1_0147"/>
<dbReference type="KEGG" id="hya:HY04AAS1_0147"/>
<dbReference type="eggNOG" id="COG1219">
    <property type="taxonomic scope" value="Bacteria"/>
</dbReference>
<dbReference type="HOGENOM" id="CLU_014218_8_2_0"/>
<dbReference type="OrthoDB" id="9804062at2"/>
<dbReference type="GO" id="GO:0009376">
    <property type="term" value="C:HslUV protease complex"/>
    <property type="evidence" value="ECO:0007669"/>
    <property type="project" value="TreeGrafter"/>
</dbReference>
<dbReference type="GO" id="GO:0005524">
    <property type="term" value="F:ATP binding"/>
    <property type="evidence" value="ECO:0007669"/>
    <property type="project" value="UniProtKB-UniRule"/>
</dbReference>
<dbReference type="GO" id="GO:0016887">
    <property type="term" value="F:ATP hydrolysis activity"/>
    <property type="evidence" value="ECO:0007669"/>
    <property type="project" value="InterPro"/>
</dbReference>
<dbReference type="GO" id="GO:0140662">
    <property type="term" value="F:ATP-dependent protein folding chaperone"/>
    <property type="evidence" value="ECO:0007669"/>
    <property type="project" value="InterPro"/>
</dbReference>
<dbReference type="GO" id="GO:0046983">
    <property type="term" value="F:protein dimerization activity"/>
    <property type="evidence" value="ECO:0007669"/>
    <property type="project" value="InterPro"/>
</dbReference>
<dbReference type="GO" id="GO:0051082">
    <property type="term" value="F:unfolded protein binding"/>
    <property type="evidence" value="ECO:0007669"/>
    <property type="project" value="UniProtKB-UniRule"/>
</dbReference>
<dbReference type="GO" id="GO:0008270">
    <property type="term" value="F:zinc ion binding"/>
    <property type="evidence" value="ECO:0007669"/>
    <property type="project" value="InterPro"/>
</dbReference>
<dbReference type="GO" id="GO:0051301">
    <property type="term" value="P:cell division"/>
    <property type="evidence" value="ECO:0007669"/>
    <property type="project" value="TreeGrafter"/>
</dbReference>
<dbReference type="GO" id="GO:0051603">
    <property type="term" value="P:proteolysis involved in protein catabolic process"/>
    <property type="evidence" value="ECO:0007669"/>
    <property type="project" value="TreeGrafter"/>
</dbReference>
<dbReference type="CDD" id="cd19497">
    <property type="entry name" value="RecA-like_ClpX"/>
    <property type="match status" value="1"/>
</dbReference>
<dbReference type="FunFam" id="1.10.8.60:FF:000002">
    <property type="entry name" value="ATP-dependent Clp protease ATP-binding subunit ClpX"/>
    <property type="match status" value="1"/>
</dbReference>
<dbReference type="FunFam" id="3.40.50.300:FF:000005">
    <property type="entry name" value="ATP-dependent Clp protease ATP-binding subunit ClpX"/>
    <property type="match status" value="1"/>
</dbReference>
<dbReference type="Gene3D" id="1.10.8.60">
    <property type="match status" value="1"/>
</dbReference>
<dbReference type="Gene3D" id="6.20.220.10">
    <property type="entry name" value="ClpX chaperone, C4-type zinc finger domain"/>
    <property type="match status" value="1"/>
</dbReference>
<dbReference type="Gene3D" id="3.40.50.300">
    <property type="entry name" value="P-loop containing nucleotide triphosphate hydrolases"/>
    <property type="match status" value="1"/>
</dbReference>
<dbReference type="HAMAP" id="MF_00175">
    <property type="entry name" value="ClpX"/>
    <property type="match status" value="1"/>
</dbReference>
<dbReference type="InterPro" id="IPR003593">
    <property type="entry name" value="AAA+_ATPase"/>
</dbReference>
<dbReference type="InterPro" id="IPR050052">
    <property type="entry name" value="ATP-dep_Clp_protease_ClpX"/>
</dbReference>
<dbReference type="InterPro" id="IPR003959">
    <property type="entry name" value="ATPase_AAA_core"/>
</dbReference>
<dbReference type="InterPro" id="IPR019489">
    <property type="entry name" value="Clp_ATPase_C"/>
</dbReference>
<dbReference type="InterPro" id="IPR004487">
    <property type="entry name" value="Clp_protease_ATP-bd_su_ClpX"/>
</dbReference>
<dbReference type="InterPro" id="IPR046425">
    <property type="entry name" value="ClpX_bact"/>
</dbReference>
<dbReference type="InterPro" id="IPR027417">
    <property type="entry name" value="P-loop_NTPase"/>
</dbReference>
<dbReference type="InterPro" id="IPR010603">
    <property type="entry name" value="Znf_CppX_C4"/>
</dbReference>
<dbReference type="InterPro" id="IPR038366">
    <property type="entry name" value="Znf_CppX_C4_sf"/>
</dbReference>
<dbReference type="NCBIfam" id="TIGR00382">
    <property type="entry name" value="clpX"/>
    <property type="match status" value="1"/>
</dbReference>
<dbReference type="NCBIfam" id="NF003745">
    <property type="entry name" value="PRK05342.1"/>
    <property type="match status" value="1"/>
</dbReference>
<dbReference type="PANTHER" id="PTHR48102:SF7">
    <property type="entry name" value="ATP-DEPENDENT CLP PROTEASE ATP-BINDING SUBUNIT CLPX-LIKE, MITOCHONDRIAL"/>
    <property type="match status" value="1"/>
</dbReference>
<dbReference type="PANTHER" id="PTHR48102">
    <property type="entry name" value="ATP-DEPENDENT CLP PROTEASE ATP-BINDING SUBUNIT CLPX-LIKE, MITOCHONDRIAL-RELATED"/>
    <property type="match status" value="1"/>
</dbReference>
<dbReference type="Pfam" id="PF07724">
    <property type="entry name" value="AAA_2"/>
    <property type="match status" value="1"/>
</dbReference>
<dbReference type="Pfam" id="PF10431">
    <property type="entry name" value="ClpB_D2-small"/>
    <property type="match status" value="1"/>
</dbReference>
<dbReference type="Pfam" id="PF06689">
    <property type="entry name" value="zf-C4_ClpX"/>
    <property type="match status" value="1"/>
</dbReference>
<dbReference type="SMART" id="SM00382">
    <property type="entry name" value="AAA"/>
    <property type="match status" value="1"/>
</dbReference>
<dbReference type="SMART" id="SM01086">
    <property type="entry name" value="ClpB_D2-small"/>
    <property type="match status" value="1"/>
</dbReference>
<dbReference type="SMART" id="SM00994">
    <property type="entry name" value="zf-C4_ClpX"/>
    <property type="match status" value="1"/>
</dbReference>
<dbReference type="SUPFAM" id="SSF57716">
    <property type="entry name" value="Glucocorticoid receptor-like (DNA-binding domain)"/>
    <property type="match status" value="1"/>
</dbReference>
<dbReference type="SUPFAM" id="SSF52540">
    <property type="entry name" value="P-loop containing nucleoside triphosphate hydrolases"/>
    <property type="match status" value="1"/>
</dbReference>
<dbReference type="PROSITE" id="PS51902">
    <property type="entry name" value="CLPX_ZB"/>
    <property type="match status" value="1"/>
</dbReference>